<comment type="function">
    <text evidence="1">Catalyzes the reversible conversion of ribose-5-phosphate to ribulose 5-phosphate.</text>
</comment>
<comment type="catalytic activity">
    <reaction evidence="1">
        <text>aldehydo-D-ribose 5-phosphate = D-ribulose 5-phosphate</text>
        <dbReference type="Rhea" id="RHEA:14657"/>
        <dbReference type="ChEBI" id="CHEBI:58121"/>
        <dbReference type="ChEBI" id="CHEBI:58273"/>
        <dbReference type="EC" id="5.3.1.6"/>
    </reaction>
</comment>
<comment type="pathway">
    <text evidence="1">Carbohydrate degradation; pentose phosphate pathway; D-ribose 5-phosphate from D-ribulose 5-phosphate (non-oxidative stage): step 1/1.</text>
</comment>
<comment type="subunit">
    <text evidence="1">Homodimer.</text>
</comment>
<comment type="similarity">
    <text evidence="1">Belongs to the ribose 5-phosphate isomerase family.</text>
</comment>
<proteinExistence type="inferred from homology"/>
<sequence>MTQDELKRLVGQAAADYVIQNVPEGAVIGVGTGSTANCFIDALAAVKSRYRGAVSSSVATTERLKSHGIKVFDLNEIDALQVYVDGADEIDAGGAMIKGGGGALTREKIVASVADTFVCIADGSKRVPVLGAFPLPIEVVPMARTAIGRRVTALGGVPVLRVTKDGAPYITDNGNEIIDVKGLQIADPRGFEARVNAWPGVVTVGLFAERGANLCLLGTENGVETIVYPAA</sequence>
<keyword id="KW-0413">Isomerase</keyword>
<organism>
    <name type="scientific">Burkholderia cenocepacia (strain ATCC BAA-245 / DSM 16553 / LMG 16656 / NCTC 13227 / J2315 / CF5610)</name>
    <name type="common">Burkholderia cepacia (strain J2315)</name>
    <dbReference type="NCBI Taxonomy" id="216591"/>
    <lineage>
        <taxon>Bacteria</taxon>
        <taxon>Pseudomonadati</taxon>
        <taxon>Pseudomonadota</taxon>
        <taxon>Betaproteobacteria</taxon>
        <taxon>Burkholderiales</taxon>
        <taxon>Burkholderiaceae</taxon>
        <taxon>Burkholderia</taxon>
        <taxon>Burkholderia cepacia complex</taxon>
    </lineage>
</organism>
<feature type="chain" id="PRO_1000097652" description="Ribose-5-phosphate isomerase A">
    <location>
        <begin position="1"/>
        <end position="231"/>
    </location>
</feature>
<feature type="active site" description="Proton acceptor" evidence="1">
    <location>
        <position position="107"/>
    </location>
</feature>
<feature type="binding site" evidence="1">
    <location>
        <begin position="32"/>
        <end position="35"/>
    </location>
    <ligand>
        <name>substrate</name>
    </ligand>
</feature>
<feature type="binding site" evidence="1">
    <location>
        <begin position="85"/>
        <end position="88"/>
    </location>
    <ligand>
        <name>substrate</name>
    </ligand>
</feature>
<feature type="binding site" evidence="1">
    <location>
        <begin position="98"/>
        <end position="101"/>
    </location>
    <ligand>
        <name>substrate</name>
    </ligand>
</feature>
<feature type="binding site" evidence="1">
    <location>
        <position position="125"/>
    </location>
    <ligand>
        <name>substrate</name>
    </ligand>
</feature>
<dbReference type="EC" id="5.3.1.6" evidence="1"/>
<dbReference type="EMBL" id="AM747720">
    <property type="protein sequence ID" value="CAR51855.1"/>
    <property type="molecule type" value="Genomic_DNA"/>
</dbReference>
<dbReference type="RefSeq" id="WP_006484224.1">
    <property type="nucleotide sequence ID" value="NC_011000.1"/>
</dbReference>
<dbReference type="SMR" id="B4E852"/>
<dbReference type="KEGG" id="bcj:BCAL1556"/>
<dbReference type="eggNOG" id="COG0120">
    <property type="taxonomic scope" value="Bacteria"/>
</dbReference>
<dbReference type="HOGENOM" id="CLU_056590_1_1_4"/>
<dbReference type="BioCyc" id="BCEN216591:G1G1V-1729-MONOMER"/>
<dbReference type="UniPathway" id="UPA00115">
    <property type="reaction ID" value="UER00412"/>
</dbReference>
<dbReference type="Proteomes" id="UP000001035">
    <property type="component" value="Chromosome 1"/>
</dbReference>
<dbReference type="GO" id="GO:0005829">
    <property type="term" value="C:cytosol"/>
    <property type="evidence" value="ECO:0007669"/>
    <property type="project" value="TreeGrafter"/>
</dbReference>
<dbReference type="GO" id="GO:0004751">
    <property type="term" value="F:ribose-5-phosphate isomerase activity"/>
    <property type="evidence" value="ECO:0007669"/>
    <property type="project" value="UniProtKB-UniRule"/>
</dbReference>
<dbReference type="GO" id="GO:0006014">
    <property type="term" value="P:D-ribose metabolic process"/>
    <property type="evidence" value="ECO:0007669"/>
    <property type="project" value="TreeGrafter"/>
</dbReference>
<dbReference type="GO" id="GO:0009052">
    <property type="term" value="P:pentose-phosphate shunt, non-oxidative branch"/>
    <property type="evidence" value="ECO:0007669"/>
    <property type="project" value="UniProtKB-UniRule"/>
</dbReference>
<dbReference type="CDD" id="cd01398">
    <property type="entry name" value="RPI_A"/>
    <property type="match status" value="1"/>
</dbReference>
<dbReference type="FunFam" id="3.40.50.1360:FF:000001">
    <property type="entry name" value="Ribose-5-phosphate isomerase A"/>
    <property type="match status" value="1"/>
</dbReference>
<dbReference type="Gene3D" id="3.30.70.260">
    <property type="match status" value="1"/>
</dbReference>
<dbReference type="Gene3D" id="3.40.50.1360">
    <property type="match status" value="1"/>
</dbReference>
<dbReference type="HAMAP" id="MF_00170">
    <property type="entry name" value="Rib_5P_isom_A"/>
    <property type="match status" value="1"/>
</dbReference>
<dbReference type="InterPro" id="IPR037171">
    <property type="entry name" value="NagB/RpiA_transferase-like"/>
</dbReference>
<dbReference type="InterPro" id="IPR020672">
    <property type="entry name" value="Ribose5P_isomerase_typA_subgr"/>
</dbReference>
<dbReference type="InterPro" id="IPR004788">
    <property type="entry name" value="Ribose5P_isomerase_type_A"/>
</dbReference>
<dbReference type="NCBIfam" id="NF001924">
    <property type="entry name" value="PRK00702.1"/>
    <property type="match status" value="1"/>
</dbReference>
<dbReference type="NCBIfam" id="TIGR00021">
    <property type="entry name" value="rpiA"/>
    <property type="match status" value="1"/>
</dbReference>
<dbReference type="PANTHER" id="PTHR11934">
    <property type="entry name" value="RIBOSE-5-PHOSPHATE ISOMERASE"/>
    <property type="match status" value="1"/>
</dbReference>
<dbReference type="PANTHER" id="PTHR11934:SF0">
    <property type="entry name" value="RIBOSE-5-PHOSPHATE ISOMERASE"/>
    <property type="match status" value="1"/>
</dbReference>
<dbReference type="Pfam" id="PF06026">
    <property type="entry name" value="Rib_5-P_isom_A"/>
    <property type="match status" value="1"/>
</dbReference>
<dbReference type="SUPFAM" id="SSF75445">
    <property type="entry name" value="D-ribose-5-phosphate isomerase (RpiA), lid domain"/>
    <property type="match status" value="1"/>
</dbReference>
<dbReference type="SUPFAM" id="SSF100950">
    <property type="entry name" value="NagB/RpiA/CoA transferase-like"/>
    <property type="match status" value="1"/>
</dbReference>
<evidence type="ECO:0000255" key="1">
    <source>
        <dbReference type="HAMAP-Rule" id="MF_00170"/>
    </source>
</evidence>
<name>RPIA_BURCJ</name>
<reference key="1">
    <citation type="journal article" date="2009" name="J. Bacteriol.">
        <title>The genome of Burkholderia cenocepacia J2315, an epidemic pathogen of cystic fibrosis patients.</title>
        <authorList>
            <person name="Holden M.T."/>
            <person name="Seth-Smith H.M."/>
            <person name="Crossman L.C."/>
            <person name="Sebaihia M."/>
            <person name="Bentley S.D."/>
            <person name="Cerdeno-Tarraga A.M."/>
            <person name="Thomson N.R."/>
            <person name="Bason N."/>
            <person name="Quail M.A."/>
            <person name="Sharp S."/>
            <person name="Cherevach I."/>
            <person name="Churcher C."/>
            <person name="Goodhead I."/>
            <person name="Hauser H."/>
            <person name="Holroyd N."/>
            <person name="Mungall K."/>
            <person name="Scott P."/>
            <person name="Walker D."/>
            <person name="White B."/>
            <person name="Rose H."/>
            <person name="Iversen P."/>
            <person name="Mil-Homens D."/>
            <person name="Rocha E.P."/>
            <person name="Fialho A.M."/>
            <person name="Baldwin A."/>
            <person name="Dowson C."/>
            <person name="Barrell B.G."/>
            <person name="Govan J.R."/>
            <person name="Vandamme P."/>
            <person name="Hart C.A."/>
            <person name="Mahenthiralingam E."/>
            <person name="Parkhill J."/>
        </authorList>
    </citation>
    <scope>NUCLEOTIDE SEQUENCE [LARGE SCALE GENOMIC DNA]</scope>
    <source>
        <strain>ATCC BAA-245 / DSM 16553 / LMG 16656 / NCTC 13227 / J2315 / CF5610</strain>
    </source>
</reference>
<gene>
    <name evidence="1" type="primary">rpiA</name>
    <name type="ordered locus">BceJ2315_15220</name>
    <name type="ORF">BCAL1556</name>
</gene>
<protein>
    <recommendedName>
        <fullName evidence="1">Ribose-5-phosphate isomerase A</fullName>
        <ecNumber evidence="1">5.3.1.6</ecNumber>
    </recommendedName>
    <alternativeName>
        <fullName evidence="1">Phosphoriboisomerase A</fullName>
        <shortName evidence="1">PRI</shortName>
    </alternativeName>
</protein>
<accession>B4E852</accession>